<protein>
    <recommendedName>
        <fullName>Egg cell-secreted protein 1.4</fullName>
    </recommendedName>
</protein>
<evidence type="ECO:0000255" key="1"/>
<evidence type="ECO:0000269" key="2">
    <source>
    </source>
</evidence>
<evidence type="ECO:0000305" key="3"/>
<gene>
    <name type="primary">EC1.4</name>
    <name type="ordered locus">At4g39340</name>
    <name type="ORF">T22F8.240</name>
</gene>
<proteinExistence type="evidence at transcript level"/>
<sequence length="127" mass="13613">MASNTTFLFSTVTLLIILLNTTVSGRDLPAESSTNIAARLQSGGLMECWNALYELKSCTNEIVLFFLNGETKLGVSCCESVDIITTNCWPAMLTSLGFTPEEANVLRGFCQNPNSGDSSPAPSPKIV</sequence>
<feature type="signal peptide" evidence="1">
    <location>
        <begin position="1"/>
        <end position="25"/>
    </location>
</feature>
<feature type="chain" id="PRO_0000421244" description="Egg cell-secreted protein 1.4">
    <location>
        <begin position="26"/>
        <end position="127"/>
    </location>
</feature>
<dbReference type="EMBL" id="AL050351">
    <property type="protein sequence ID" value="CAB43649.1"/>
    <property type="molecule type" value="Genomic_DNA"/>
</dbReference>
<dbReference type="EMBL" id="AL161595">
    <property type="protein sequence ID" value="CAB80597.1"/>
    <property type="molecule type" value="Genomic_DNA"/>
</dbReference>
<dbReference type="EMBL" id="CP002687">
    <property type="protein sequence ID" value="AEE87058.1"/>
    <property type="molecule type" value="Genomic_DNA"/>
</dbReference>
<dbReference type="EMBL" id="DQ446907">
    <property type="protein sequence ID" value="ABE65542.1"/>
    <property type="molecule type" value="Genomic_DNA"/>
</dbReference>
<dbReference type="EMBL" id="DQ653255">
    <property type="protein sequence ID" value="ABK28267.1"/>
    <property type="status" value="ALT_SEQ"/>
    <property type="molecule type" value="Genomic_DNA"/>
</dbReference>
<dbReference type="PIR" id="T08582">
    <property type="entry name" value="T08582"/>
</dbReference>
<dbReference type="RefSeq" id="NP_195644.1">
    <property type="nucleotide sequence ID" value="NM_120094.1"/>
</dbReference>
<dbReference type="STRING" id="3702.Q9T039"/>
<dbReference type="PaxDb" id="3702-AT4G39340.1"/>
<dbReference type="ProteomicsDB" id="222052"/>
<dbReference type="EnsemblPlants" id="AT4G39340.1">
    <property type="protein sequence ID" value="AT4G39340.1"/>
    <property type="gene ID" value="AT4G39340"/>
</dbReference>
<dbReference type="GeneID" id="830089"/>
<dbReference type="Gramene" id="AT4G39340.1">
    <property type="protein sequence ID" value="AT4G39340.1"/>
    <property type="gene ID" value="AT4G39340"/>
</dbReference>
<dbReference type="KEGG" id="ath:AT4G39340"/>
<dbReference type="Araport" id="AT4G39340"/>
<dbReference type="TAIR" id="AT4G39340">
    <property type="gene designation" value="EC1.4"/>
</dbReference>
<dbReference type="eggNOG" id="ENOG502S3PF">
    <property type="taxonomic scope" value="Eukaryota"/>
</dbReference>
<dbReference type="HOGENOM" id="CLU_128969_2_0_1"/>
<dbReference type="InParanoid" id="Q9T039"/>
<dbReference type="OMA" id="CCEAVEV"/>
<dbReference type="PhylomeDB" id="Q9T039"/>
<dbReference type="PRO" id="PR:Q9T039"/>
<dbReference type="Proteomes" id="UP000006548">
    <property type="component" value="Chromosome 4"/>
</dbReference>
<dbReference type="ExpressionAtlas" id="Q9T039">
    <property type="expression patterns" value="baseline and differential"/>
</dbReference>
<dbReference type="GO" id="GO:0031410">
    <property type="term" value="C:cytoplasmic vesicle"/>
    <property type="evidence" value="ECO:0007669"/>
    <property type="project" value="UniProtKB-KW"/>
</dbReference>
<dbReference type="GO" id="GO:0005576">
    <property type="term" value="C:extracellular region"/>
    <property type="evidence" value="ECO:0000314"/>
    <property type="project" value="UniProtKB"/>
</dbReference>
<dbReference type="GO" id="GO:0031982">
    <property type="term" value="C:vesicle"/>
    <property type="evidence" value="ECO:0000314"/>
    <property type="project" value="UniProtKB"/>
</dbReference>
<dbReference type="GO" id="GO:0009567">
    <property type="term" value="P:double fertilization forming a zygote and endosperm"/>
    <property type="evidence" value="ECO:0000316"/>
    <property type="project" value="TAIR"/>
</dbReference>
<dbReference type="GO" id="GO:0080155">
    <property type="term" value="P:regulation of double fertilization forming a zygote and endosperm"/>
    <property type="evidence" value="ECO:0000315"/>
    <property type="project" value="UniProtKB"/>
</dbReference>
<dbReference type="GO" id="GO:2000008">
    <property type="term" value="P:regulation of protein localization to cell surface"/>
    <property type="evidence" value="ECO:0000315"/>
    <property type="project" value="UniProtKB"/>
</dbReference>
<dbReference type="InterPro" id="IPR044711">
    <property type="entry name" value="EC11-15"/>
</dbReference>
<dbReference type="InterPro" id="IPR008502">
    <property type="entry name" value="Prolamin-like"/>
</dbReference>
<dbReference type="PANTHER" id="PTHR35293:SF10">
    <property type="entry name" value="EGG CELL-SECRETED PROTEIN 1.2-RELATED"/>
    <property type="match status" value="1"/>
</dbReference>
<dbReference type="PANTHER" id="PTHR35293">
    <property type="entry name" value="EGG CELL-SECRETED PROTEIN 1.5"/>
    <property type="match status" value="1"/>
</dbReference>
<dbReference type="Pfam" id="PF05617">
    <property type="entry name" value="Prolamin_like"/>
    <property type="match status" value="1"/>
</dbReference>
<name>EC14_ARATH</name>
<organism>
    <name type="scientific">Arabidopsis thaliana</name>
    <name type="common">Mouse-ear cress</name>
    <dbReference type="NCBI Taxonomy" id="3702"/>
    <lineage>
        <taxon>Eukaryota</taxon>
        <taxon>Viridiplantae</taxon>
        <taxon>Streptophyta</taxon>
        <taxon>Embryophyta</taxon>
        <taxon>Tracheophyta</taxon>
        <taxon>Spermatophyta</taxon>
        <taxon>Magnoliopsida</taxon>
        <taxon>eudicotyledons</taxon>
        <taxon>Gunneridae</taxon>
        <taxon>Pentapetalae</taxon>
        <taxon>rosids</taxon>
        <taxon>malvids</taxon>
        <taxon>Brassicales</taxon>
        <taxon>Brassicaceae</taxon>
        <taxon>Camelineae</taxon>
        <taxon>Arabidopsis</taxon>
    </lineage>
</organism>
<comment type="function">
    <text evidence="2">Involved in the regulation of gamete interactions during the double fertilization and to prevent multiple-pollen tube attraction; mediates the redistribution of the gamete fusogen HAP2/GCS1 to the cell surface after secretion upon sperm arrival.</text>
</comment>
<comment type="subcellular location">
    <subcellularLocation>
        <location evidence="2">Cytoplasmic vesicle</location>
    </subcellularLocation>
    <subcellularLocation>
        <location evidence="2">Secreted</location>
    </subcellularLocation>
    <text>Secreted via vesicle exocytose upon sperm arrival, especially in the apical region of the degenerating synergid cell.</text>
</comment>
<comment type="tissue specificity">
    <text evidence="2">Restricted to female reproductive tissues, specifically accumulating in storage vesicles of the unfertilized egg cell.</text>
</comment>
<comment type="developmental stage">
    <text evidence="2">Confined to the egg cell before fertilization, but disappears upon gamete fusion. Also present in zygotes and early embryos.</text>
</comment>
<comment type="similarity">
    <text evidence="3">Belongs to the plant egg cell-secreted peptide family.</text>
</comment>
<comment type="sequence caution" evidence="3">
    <conflict type="erroneous termination">
        <sequence resource="EMBL-CDS" id="ABK28267"/>
    </conflict>
    <text>Extended C-terminus.</text>
</comment>
<reference key="1">
    <citation type="journal article" date="1999" name="Nature">
        <title>Sequence and analysis of chromosome 4 of the plant Arabidopsis thaliana.</title>
        <authorList>
            <person name="Mayer K.F.X."/>
            <person name="Schueller C."/>
            <person name="Wambutt R."/>
            <person name="Murphy G."/>
            <person name="Volckaert G."/>
            <person name="Pohl T."/>
            <person name="Duesterhoeft A."/>
            <person name="Stiekema W."/>
            <person name="Entian K.-D."/>
            <person name="Terryn N."/>
            <person name="Harris B."/>
            <person name="Ansorge W."/>
            <person name="Brandt P."/>
            <person name="Grivell L.A."/>
            <person name="Rieger M."/>
            <person name="Weichselgartner M."/>
            <person name="de Simone V."/>
            <person name="Obermaier B."/>
            <person name="Mache R."/>
            <person name="Mueller M."/>
            <person name="Kreis M."/>
            <person name="Delseny M."/>
            <person name="Puigdomenech P."/>
            <person name="Watson M."/>
            <person name="Schmidtheini T."/>
            <person name="Reichert B."/>
            <person name="Portetelle D."/>
            <person name="Perez-Alonso M."/>
            <person name="Boutry M."/>
            <person name="Bancroft I."/>
            <person name="Vos P."/>
            <person name="Hoheisel J."/>
            <person name="Zimmermann W."/>
            <person name="Wedler H."/>
            <person name="Ridley P."/>
            <person name="Langham S.-A."/>
            <person name="McCullagh B."/>
            <person name="Bilham L."/>
            <person name="Robben J."/>
            <person name="van der Schueren J."/>
            <person name="Grymonprez B."/>
            <person name="Chuang Y.-J."/>
            <person name="Vandenbussche F."/>
            <person name="Braeken M."/>
            <person name="Weltjens I."/>
            <person name="Voet M."/>
            <person name="Bastiaens I."/>
            <person name="Aert R."/>
            <person name="Defoor E."/>
            <person name="Weitzenegger T."/>
            <person name="Bothe G."/>
            <person name="Ramsperger U."/>
            <person name="Hilbert H."/>
            <person name="Braun M."/>
            <person name="Holzer E."/>
            <person name="Brandt A."/>
            <person name="Peters S."/>
            <person name="van Staveren M."/>
            <person name="Dirkse W."/>
            <person name="Mooijman P."/>
            <person name="Klein Lankhorst R."/>
            <person name="Rose M."/>
            <person name="Hauf J."/>
            <person name="Koetter P."/>
            <person name="Berneiser S."/>
            <person name="Hempel S."/>
            <person name="Feldpausch M."/>
            <person name="Lamberth S."/>
            <person name="Van den Daele H."/>
            <person name="De Keyser A."/>
            <person name="Buysshaert C."/>
            <person name="Gielen J."/>
            <person name="Villarroel R."/>
            <person name="De Clercq R."/>
            <person name="van Montagu M."/>
            <person name="Rogers J."/>
            <person name="Cronin A."/>
            <person name="Quail M.A."/>
            <person name="Bray-Allen S."/>
            <person name="Clark L."/>
            <person name="Doggett J."/>
            <person name="Hall S."/>
            <person name="Kay M."/>
            <person name="Lennard N."/>
            <person name="McLay K."/>
            <person name="Mayes R."/>
            <person name="Pettett A."/>
            <person name="Rajandream M.A."/>
            <person name="Lyne M."/>
            <person name="Benes V."/>
            <person name="Rechmann S."/>
            <person name="Borkova D."/>
            <person name="Bloecker H."/>
            <person name="Scharfe M."/>
            <person name="Grimm M."/>
            <person name="Loehnert T.-H."/>
            <person name="Dose S."/>
            <person name="de Haan M."/>
            <person name="Maarse A.C."/>
            <person name="Schaefer M."/>
            <person name="Mueller-Auer S."/>
            <person name="Gabel C."/>
            <person name="Fuchs M."/>
            <person name="Fartmann B."/>
            <person name="Granderath K."/>
            <person name="Dauner D."/>
            <person name="Herzl A."/>
            <person name="Neumann S."/>
            <person name="Argiriou A."/>
            <person name="Vitale D."/>
            <person name="Liguori R."/>
            <person name="Piravandi E."/>
            <person name="Massenet O."/>
            <person name="Quigley F."/>
            <person name="Clabauld G."/>
            <person name="Muendlein A."/>
            <person name="Felber R."/>
            <person name="Schnabl S."/>
            <person name="Hiller R."/>
            <person name="Schmidt W."/>
            <person name="Lecharny A."/>
            <person name="Aubourg S."/>
            <person name="Chefdor F."/>
            <person name="Cooke R."/>
            <person name="Berger C."/>
            <person name="Monfort A."/>
            <person name="Casacuberta E."/>
            <person name="Gibbons T."/>
            <person name="Weber N."/>
            <person name="Vandenbol M."/>
            <person name="Bargues M."/>
            <person name="Terol J."/>
            <person name="Torres A."/>
            <person name="Perez-Perez A."/>
            <person name="Purnelle B."/>
            <person name="Bent E."/>
            <person name="Johnson S."/>
            <person name="Tacon D."/>
            <person name="Jesse T."/>
            <person name="Heijnen L."/>
            <person name="Schwarz S."/>
            <person name="Scholler P."/>
            <person name="Heber S."/>
            <person name="Francs P."/>
            <person name="Bielke C."/>
            <person name="Frishman D."/>
            <person name="Haase D."/>
            <person name="Lemcke K."/>
            <person name="Mewes H.-W."/>
            <person name="Stocker S."/>
            <person name="Zaccaria P."/>
            <person name="Bevan M."/>
            <person name="Wilson R.K."/>
            <person name="de la Bastide M."/>
            <person name="Habermann K."/>
            <person name="Parnell L."/>
            <person name="Dedhia N."/>
            <person name="Gnoj L."/>
            <person name="Schutz K."/>
            <person name="Huang E."/>
            <person name="Spiegel L."/>
            <person name="Sekhon M."/>
            <person name="Murray J."/>
            <person name="Sheet P."/>
            <person name="Cordes M."/>
            <person name="Abu-Threideh J."/>
            <person name="Stoneking T."/>
            <person name="Kalicki J."/>
            <person name="Graves T."/>
            <person name="Harmon G."/>
            <person name="Edwards J."/>
            <person name="Latreille P."/>
            <person name="Courtney L."/>
            <person name="Cloud J."/>
            <person name="Abbott A."/>
            <person name="Scott K."/>
            <person name="Johnson D."/>
            <person name="Minx P."/>
            <person name="Bentley D."/>
            <person name="Fulton B."/>
            <person name="Miller N."/>
            <person name="Greco T."/>
            <person name="Kemp K."/>
            <person name="Kramer J."/>
            <person name="Fulton L."/>
            <person name="Mardis E."/>
            <person name="Dante M."/>
            <person name="Pepin K."/>
            <person name="Hillier L.W."/>
            <person name="Nelson J."/>
            <person name="Spieth J."/>
            <person name="Ryan E."/>
            <person name="Andrews S."/>
            <person name="Geisel C."/>
            <person name="Layman D."/>
            <person name="Du H."/>
            <person name="Ali J."/>
            <person name="Berghoff A."/>
            <person name="Jones K."/>
            <person name="Drone K."/>
            <person name="Cotton M."/>
            <person name="Joshu C."/>
            <person name="Antonoiu B."/>
            <person name="Zidanic M."/>
            <person name="Strong C."/>
            <person name="Sun H."/>
            <person name="Lamar B."/>
            <person name="Yordan C."/>
            <person name="Ma P."/>
            <person name="Zhong J."/>
            <person name="Preston R."/>
            <person name="Vil D."/>
            <person name="Shekher M."/>
            <person name="Matero A."/>
            <person name="Shah R."/>
            <person name="Swaby I.K."/>
            <person name="O'Shaughnessy A."/>
            <person name="Rodriguez M."/>
            <person name="Hoffman J."/>
            <person name="Till S."/>
            <person name="Granat S."/>
            <person name="Shohdy N."/>
            <person name="Hasegawa A."/>
            <person name="Hameed A."/>
            <person name="Lodhi M."/>
            <person name="Johnson A."/>
            <person name="Chen E."/>
            <person name="Marra M.A."/>
            <person name="Martienssen R."/>
            <person name="McCombie W.R."/>
        </authorList>
    </citation>
    <scope>NUCLEOTIDE SEQUENCE [LARGE SCALE GENOMIC DNA]</scope>
    <source>
        <strain>cv. Columbia</strain>
    </source>
</reference>
<reference key="2">
    <citation type="journal article" date="2017" name="Plant J.">
        <title>Araport11: a complete reannotation of the Arabidopsis thaliana reference genome.</title>
        <authorList>
            <person name="Cheng C.Y."/>
            <person name="Krishnakumar V."/>
            <person name="Chan A.P."/>
            <person name="Thibaud-Nissen F."/>
            <person name="Schobel S."/>
            <person name="Town C.D."/>
        </authorList>
    </citation>
    <scope>GENOME REANNOTATION</scope>
    <source>
        <strain>cv. Columbia</strain>
    </source>
</reference>
<reference key="3">
    <citation type="journal article" date="2006" name="Plant Biotechnol. J.">
        <title>Simultaneous high-throughput recombinational cloning of open reading frames in closed and open configurations.</title>
        <authorList>
            <person name="Underwood B.A."/>
            <person name="Vanderhaeghen R."/>
            <person name="Whitford R."/>
            <person name="Town C.D."/>
            <person name="Hilson P."/>
        </authorList>
    </citation>
    <scope>NUCLEOTIDE SEQUENCE [LARGE SCALE GENOMIC DNA]</scope>
    <source>
        <strain>cv. Columbia</strain>
    </source>
</reference>
<reference key="4">
    <citation type="journal article" date="2012" name="Science">
        <title>Egg cell-secreted EC1 triggers sperm cell activation during double fertilization.</title>
        <authorList>
            <person name="Sprunck S."/>
            <person name="Rademacher S."/>
            <person name="Vogler F."/>
            <person name="Gheyselinck J."/>
            <person name="Grossniklaus U."/>
            <person name="Dresselhaus T."/>
        </authorList>
    </citation>
    <scope>FUNCTION</scope>
    <scope>TISSUE SPECIFICITY</scope>
    <scope>DEVELOPMENTAL STAGE</scope>
    <scope>SUBCELLULAR LOCATION</scope>
</reference>
<keyword id="KW-0968">Cytoplasmic vesicle</keyword>
<keyword id="KW-0278">Fertilization</keyword>
<keyword id="KW-1185">Reference proteome</keyword>
<keyword id="KW-0964">Secreted</keyword>
<keyword id="KW-0732">Signal</keyword>
<accession>Q9T039</accession>
<accession>A0MFC9</accession>